<name>GSIA_ECOL6</name>
<keyword id="KW-0067">ATP-binding</keyword>
<keyword id="KW-0997">Cell inner membrane</keyword>
<keyword id="KW-1003">Cell membrane</keyword>
<keyword id="KW-0378">Hydrolase</keyword>
<keyword id="KW-0472">Membrane</keyword>
<keyword id="KW-0547">Nucleotide-binding</keyword>
<keyword id="KW-1185">Reference proteome</keyword>
<keyword id="KW-0677">Repeat</keyword>
<keyword id="KW-1278">Translocase</keyword>
<keyword id="KW-0813">Transport</keyword>
<comment type="function">
    <text evidence="1">Part of the ABC transporter complex GsiABCD involved in glutathione import. Responsible for energy coupling to the transport system.</text>
</comment>
<comment type="catalytic activity">
    <reaction evidence="1">
        <text>glutathione(out) + ATP + H2O = glutathione(in) + ADP + phosphate + H(+)</text>
        <dbReference type="Rhea" id="RHEA:29791"/>
        <dbReference type="ChEBI" id="CHEBI:15377"/>
        <dbReference type="ChEBI" id="CHEBI:15378"/>
        <dbReference type="ChEBI" id="CHEBI:30616"/>
        <dbReference type="ChEBI" id="CHEBI:43474"/>
        <dbReference type="ChEBI" id="CHEBI:57925"/>
        <dbReference type="ChEBI" id="CHEBI:456216"/>
        <dbReference type="EC" id="7.4.2.10"/>
    </reaction>
</comment>
<comment type="subunit">
    <text evidence="1">The complex is composed of two ATP-binding proteins (GsiA), two transmembrane proteins (GsiC and GsiD) and a solute-binding protein (GsiB).</text>
</comment>
<comment type="subcellular location">
    <subcellularLocation>
        <location evidence="1">Cell inner membrane</location>
        <topology evidence="1">Peripheral membrane protein</topology>
    </subcellularLocation>
</comment>
<comment type="similarity">
    <text evidence="3">Belongs to the ABC transporter superfamily. Glutathione importer (TC 3.A.1.5.11) family.</text>
</comment>
<comment type="sequence caution" evidence="3">
    <conflict type="erroneous initiation">
        <sequence resource="EMBL-CDS" id="AAN79387"/>
    </conflict>
</comment>
<reference key="1">
    <citation type="journal article" date="2002" name="Proc. Natl. Acad. Sci. U.S.A.">
        <title>Extensive mosaic structure revealed by the complete genome sequence of uropathogenic Escherichia coli.</title>
        <authorList>
            <person name="Welch R.A."/>
            <person name="Burland V."/>
            <person name="Plunkett G. III"/>
            <person name="Redford P."/>
            <person name="Roesch P."/>
            <person name="Rasko D."/>
            <person name="Buckles E.L."/>
            <person name="Liou S.-R."/>
            <person name="Boutin A."/>
            <person name="Hackett J."/>
            <person name="Stroud D."/>
            <person name="Mayhew G.F."/>
            <person name="Rose D.J."/>
            <person name="Zhou S."/>
            <person name="Schwartz D.C."/>
            <person name="Perna N.T."/>
            <person name="Mobley H.L.T."/>
            <person name="Donnenberg M.S."/>
            <person name="Blattner F.R."/>
        </authorList>
    </citation>
    <scope>NUCLEOTIDE SEQUENCE [LARGE SCALE GENOMIC DNA]</scope>
    <source>
        <strain>CFT073 / ATCC 700928 / UPEC</strain>
    </source>
</reference>
<feature type="chain" id="PRO_0000280021" description="Glutathione import ATP-binding protein GsiA">
    <location>
        <begin position="1"/>
        <end position="623"/>
    </location>
</feature>
<feature type="domain" description="ABC transporter 1" evidence="2">
    <location>
        <begin position="15"/>
        <end position="269"/>
    </location>
</feature>
<feature type="domain" description="ABC transporter 2" evidence="2">
    <location>
        <begin position="314"/>
        <end position="564"/>
    </location>
</feature>
<feature type="binding site" evidence="2">
    <location>
        <begin position="49"/>
        <end position="56"/>
    </location>
    <ligand>
        <name>ATP</name>
        <dbReference type="ChEBI" id="CHEBI:30616"/>
    </ligand>
</feature>
<feature type="binding site" evidence="2">
    <location>
        <begin position="357"/>
        <end position="364"/>
    </location>
    <ligand>
        <name>ATP</name>
        <dbReference type="ChEBI" id="CHEBI:30616"/>
    </ligand>
</feature>
<sequence length="623" mass="69176">MPHSDELDAGDVLAVENLNIAFMQEQQKIAAVRNLSFSLQRGETLAIVGESGSGKSVTALALMRLLEQAGGLVQCDKMLLQRRSREVIELSEQSAAQMRHVRGADMAMIFQEPMTSLNPVFAVGEQIAESIRLHQNASREEAMVEAKRMLDQVRIPEAQTILSRYPHQLSGGMRQRVMIAMALSCRPAVLIADEPTTALDVTIQAQILQLIKVLQKEMSMGVIFITHDMGVVAEIADRVLVMYQGEAVETGSVEQIFHAPQHPYTRALLAAVPQLGAMKGLDYPRRFPLISLEHPAKQEPPIEQKTVVDGEPVLRVRNLVTRFPLRSGLLNRVTREVHAVEKVSFDLWPGETLSLVGESGSGKSTTGRALLRLVESQGGEIIFNGQRIDTLSPCKLQALRRDIQFIFQDPYASLDPRQTIGDSIIEPLRVHGLLPGKEAAARVAWLLERVGLLPEHAWRYPHEFSGGQRQRICIARALALNPKVIIADEAVSALDVSIRGQIINLLLDLQRDFGIAYLFISHDMAVVERISHRVAVMYLGQIVEIGPRRAVFENPQHPYTRKLLAAVPVAEPSRQRPQRVLLSDDLPSNIHLRGEEVAAVSLQCVGPGHYVAQPQSEYAFMRR</sequence>
<dbReference type="EC" id="7.4.2.10" evidence="1"/>
<dbReference type="EMBL" id="AE014075">
    <property type="protein sequence ID" value="AAN79387.1"/>
    <property type="status" value="ALT_INIT"/>
    <property type="molecule type" value="Genomic_DNA"/>
</dbReference>
<dbReference type="RefSeq" id="WP_001304780.1">
    <property type="nucleotide sequence ID" value="NZ_CP051263.1"/>
</dbReference>
<dbReference type="SMR" id="Q8FJL0"/>
<dbReference type="STRING" id="199310.c0914"/>
<dbReference type="KEGG" id="ecc:c0914"/>
<dbReference type="eggNOG" id="COG4172">
    <property type="taxonomic scope" value="Bacteria"/>
</dbReference>
<dbReference type="HOGENOM" id="CLU_000604_86_3_6"/>
<dbReference type="Proteomes" id="UP000001410">
    <property type="component" value="Chromosome"/>
</dbReference>
<dbReference type="GO" id="GO:0005886">
    <property type="term" value="C:plasma membrane"/>
    <property type="evidence" value="ECO:0007669"/>
    <property type="project" value="UniProtKB-SubCell"/>
</dbReference>
<dbReference type="GO" id="GO:0005524">
    <property type="term" value="F:ATP binding"/>
    <property type="evidence" value="ECO:0007669"/>
    <property type="project" value="UniProtKB-KW"/>
</dbReference>
<dbReference type="GO" id="GO:0016887">
    <property type="term" value="F:ATP hydrolysis activity"/>
    <property type="evidence" value="ECO:0007669"/>
    <property type="project" value="InterPro"/>
</dbReference>
<dbReference type="GO" id="GO:0015833">
    <property type="term" value="P:peptide transport"/>
    <property type="evidence" value="ECO:0007669"/>
    <property type="project" value="InterPro"/>
</dbReference>
<dbReference type="GO" id="GO:0055085">
    <property type="term" value="P:transmembrane transport"/>
    <property type="evidence" value="ECO:0007669"/>
    <property type="project" value="UniProtKB-ARBA"/>
</dbReference>
<dbReference type="CDD" id="cd03257">
    <property type="entry name" value="ABC_NikE_OppD_transporters"/>
    <property type="match status" value="2"/>
</dbReference>
<dbReference type="FunFam" id="3.40.50.300:FF:001061">
    <property type="entry name" value="Glutathione import ATP-binding protein GsiA"/>
    <property type="match status" value="1"/>
</dbReference>
<dbReference type="FunFam" id="3.40.50.300:FF:000016">
    <property type="entry name" value="Oligopeptide ABC transporter ATP-binding component"/>
    <property type="match status" value="1"/>
</dbReference>
<dbReference type="Gene3D" id="3.40.50.300">
    <property type="entry name" value="P-loop containing nucleotide triphosphate hydrolases"/>
    <property type="match status" value="2"/>
</dbReference>
<dbReference type="InterPro" id="IPR003593">
    <property type="entry name" value="AAA+_ATPase"/>
</dbReference>
<dbReference type="InterPro" id="IPR050319">
    <property type="entry name" value="ABC_transp_ATP-bind"/>
</dbReference>
<dbReference type="InterPro" id="IPR003439">
    <property type="entry name" value="ABC_transporter-like_ATP-bd"/>
</dbReference>
<dbReference type="InterPro" id="IPR017871">
    <property type="entry name" value="ABC_transporter-like_CS"/>
</dbReference>
<dbReference type="InterPro" id="IPR013563">
    <property type="entry name" value="Oligopep_ABC_C"/>
</dbReference>
<dbReference type="InterPro" id="IPR027417">
    <property type="entry name" value="P-loop_NTPase"/>
</dbReference>
<dbReference type="NCBIfam" id="NF007613">
    <property type="entry name" value="PRK10261.1"/>
    <property type="match status" value="1"/>
</dbReference>
<dbReference type="NCBIfam" id="NF007739">
    <property type="entry name" value="PRK10419.1"/>
    <property type="match status" value="2"/>
</dbReference>
<dbReference type="NCBIfam" id="NF008453">
    <property type="entry name" value="PRK11308.1"/>
    <property type="match status" value="2"/>
</dbReference>
<dbReference type="PANTHER" id="PTHR43776:SF15">
    <property type="entry name" value="GLUTATHIONE IMPORT ATP-BINDING PROTEIN GSIA"/>
    <property type="match status" value="1"/>
</dbReference>
<dbReference type="PANTHER" id="PTHR43776">
    <property type="entry name" value="TRANSPORT ATP-BINDING PROTEIN"/>
    <property type="match status" value="1"/>
</dbReference>
<dbReference type="Pfam" id="PF00005">
    <property type="entry name" value="ABC_tran"/>
    <property type="match status" value="2"/>
</dbReference>
<dbReference type="Pfam" id="PF08352">
    <property type="entry name" value="oligo_HPY"/>
    <property type="match status" value="2"/>
</dbReference>
<dbReference type="SMART" id="SM00382">
    <property type="entry name" value="AAA"/>
    <property type="match status" value="2"/>
</dbReference>
<dbReference type="SUPFAM" id="SSF52540">
    <property type="entry name" value="P-loop containing nucleoside triphosphate hydrolases"/>
    <property type="match status" value="2"/>
</dbReference>
<dbReference type="PROSITE" id="PS00211">
    <property type="entry name" value="ABC_TRANSPORTER_1"/>
    <property type="match status" value="2"/>
</dbReference>
<dbReference type="PROSITE" id="PS50893">
    <property type="entry name" value="ABC_TRANSPORTER_2"/>
    <property type="match status" value="2"/>
</dbReference>
<proteinExistence type="inferred from homology"/>
<organism>
    <name type="scientific">Escherichia coli O6:H1 (strain CFT073 / ATCC 700928 / UPEC)</name>
    <dbReference type="NCBI Taxonomy" id="199310"/>
    <lineage>
        <taxon>Bacteria</taxon>
        <taxon>Pseudomonadati</taxon>
        <taxon>Pseudomonadota</taxon>
        <taxon>Gammaproteobacteria</taxon>
        <taxon>Enterobacterales</taxon>
        <taxon>Enterobacteriaceae</taxon>
        <taxon>Escherichia</taxon>
    </lineage>
</organism>
<protein>
    <recommendedName>
        <fullName evidence="1">Glutathione import ATP-binding protein GsiA</fullName>
        <ecNumber evidence="1">7.4.2.10</ecNumber>
    </recommendedName>
</protein>
<accession>Q8FJL0</accession>
<gene>
    <name evidence="1" type="primary">gsiA</name>
    <name type="ordered locus">c0914</name>
</gene>
<evidence type="ECO:0000250" key="1">
    <source>
        <dbReference type="UniProtKB" id="P75796"/>
    </source>
</evidence>
<evidence type="ECO:0000255" key="2">
    <source>
        <dbReference type="PROSITE-ProRule" id="PRU00434"/>
    </source>
</evidence>
<evidence type="ECO:0000305" key="3"/>